<proteinExistence type="inferred from homology"/>
<protein>
    <recommendedName>
        <fullName evidence="1">Asparagine--tRNA ligase</fullName>
        <ecNumber evidence="1">6.1.1.22</ecNumber>
    </recommendedName>
    <alternativeName>
        <fullName evidence="1">Asparaginyl-tRNA synthetase</fullName>
        <shortName evidence="1">AsnRS</shortName>
    </alternativeName>
</protein>
<organism>
    <name type="scientific">Aeromonas hydrophila subsp. hydrophila (strain ATCC 7966 / DSM 30187 / BCRC 13018 / CCUG 14551 / JCM 1027 / KCTC 2358 / NCIMB 9240 / NCTC 8049)</name>
    <dbReference type="NCBI Taxonomy" id="380703"/>
    <lineage>
        <taxon>Bacteria</taxon>
        <taxon>Pseudomonadati</taxon>
        <taxon>Pseudomonadota</taxon>
        <taxon>Gammaproteobacteria</taxon>
        <taxon>Aeromonadales</taxon>
        <taxon>Aeromonadaceae</taxon>
        <taxon>Aeromonas</taxon>
    </lineage>
</organism>
<reference key="1">
    <citation type="journal article" date="2006" name="J. Bacteriol.">
        <title>Genome sequence of Aeromonas hydrophila ATCC 7966T: jack of all trades.</title>
        <authorList>
            <person name="Seshadri R."/>
            <person name="Joseph S.W."/>
            <person name="Chopra A.K."/>
            <person name="Sha J."/>
            <person name="Shaw J."/>
            <person name="Graf J."/>
            <person name="Haft D.H."/>
            <person name="Wu M."/>
            <person name="Ren Q."/>
            <person name="Rosovitz M.J."/>
            <person name="Madupu R."/>
            <person name="Tallon L."/>
            <person name="Kim M."/>
            <person name="Jin S."/>
            <person name="Vuong H."/>
            <person name="Stine O.C."/>
            <person name="Ali A."/>
            <person name="Horneman A.J."/>
            <person name="Heidelberg J.F."/>
        </authorList>
    </citation>
    <scope>NUCLEOTIDE SEQUENCE [LARGE SCALE GENOMIC DNA]</scope>
    <source>
        <strain>ATCC 7966 / DSM 30187 / BCRC 13018 / CCUG 14551 / JCM 1027 / KCTC 2358 / NCIMB 9240 / NCTC 8049</strain>
    </source>
</reference>
<evidence type="ECO:0000255" key="1">
    <source>
        <dbReference type="HAMAP-Rule" id="MF_00534"/>
    </source>
</evidence>
<accession>A0KIC3</accession>
<name>SYN_AERHH</name>
<feature type="chain" id="PRO_1000051374" description="Asparagine--tRNA ligase">
    <location>
        <begin position="1"/>
        <end position="466"/>
    </location>
</feature>
<comment type="catalytic activity">
    <reaction evidence="1">
        <text>tRNA(Asn) + L-asparagine + ATP = L-asparaginyl-tRNA(Asn) + AMP + diphosphate + H(+)</text>
        <dbReference type="Rhea" id="RHEA:11180"/>
        <dbReference type="Rhea" id="RHEA-COMP:9659"/>
        <dbReference type="Rhea" id="RHEA-COMP:9674"/>
        <dbReference type="ChEBI" id="CHEBI:15378"/>
        <dbReference type="ChEBI" id="CHEBI:30616"/>
        <dbReference type="ChEBI" id="CHEBI:33019"/>
        <dbReference type="ChEBI" id="CHEBI:58048"/>
        <dbReference type="ChEBI" id="CHEBI:78442"/>
        <dbReference type="ChEBI" id="CHEBI:78515"/>
        <dbReference type="ChEBI" id="CHEBI:456215"/>
        <dbReference type="EC" id="6.1.1.22"/>
    </reaction>
</comment>
<comment type="subunit">
    <text evidence="1">Homodimer.</text>
</comment>
<comment type="subcellular location">
    <subcellularLocation>
        <location evidence="1">Cytoplasm</location>
    </subcellularLocation>
</comment>
<comment type="similarity">
    <text evidence="1">Belongs to the class-II aminoacyl-tRNA synthetase family.</text>
</comment>
<dbReference type="EC" id="6.1.1.22" evidence="1"/>
<dbReference type="EMBL" id="CP000462">
    <property type="protein sequence ID" value="ABK38069.1"/>
    <property type="molecule type" value="Genomic_DNA"/>
</dbReference>
<dbReference type="RefSeq" id="WP_011705384.1">
    <property type="nucleotide sequence ID" value="NC_008570.1"/>
</dbReference>
<dbReference type="RefSeq" id="YP_856024.1">
    <property type="nucleotide sequence ID" value="NC_008570.1"/>
</dbReference>
<dbReference type="SMR" id="A0KIC3"/>
<dbReference type="STRING" id="380703.AHA_1486"/>
<dbReference type="EnsemblBacteria" id="ABK38069">
    <property type="protein sequence ID" value="ABK38069"/>
    <property type="gene ID" value="AHA_1486"/>
</dbReference>
<dbReference type="GeneID" id="4487687"/>
<dbReference type="KEGG" id="aha:AHA_1486"/>
<dbReference type="PATRIC" id="fig|380703.7.peg.1495"/>
<dbReference type="eggNOG" id="COG0017">
    <property type="taxonomic scope" value="Bacteria"/>
</dbReference>
<dbReference type="HOGENOM" id="CLU_004553_2_0_6"/>
<dbReference type="OrthoDB" id="9762036at2"/>
<dbReference type="Proteomes" id="UP000000756">
    <property type="component" value="Chromosome"/>
</dbReference>
<dbReference type="GO" id="GO:0005737">
    <property type="term" value="C:cytoplasm"/>
    <property type="evidence" value="ECO:0007669"/>
    <property type="project" value="UniProtKB-SubCell"/>
</dbReference>
<dbReference type="GO" id="GO:0004816">
    <property type="term" value="F:asparagine-tRNA ligase activity"/>
    <property type="evidence" value="ECO:0007669"/>
    <property type="project" value="UniProtKB-UniRule"/>
</dbReference>
<dbReference type="GO" id="GO:0005524">
    <property type="term" value="F:ATP binding"/>
    <property type="evidence" value="ECO:0007669"/>
    <property type="project" value="UniProtKB-UniRule"/>
</dbReference>
<dbReference type="GO" id="GO:0003676">
    <property type="term" value="F:nucleic acid binding"/>
    <property type="evidence" value="ECO:0007669"/>
    <property type="project" value="InterPro"/>
</dbReference>
<dbReference type="GO" id="GO:0006421">
    <property type="term" value="P:asparaginyl-tRNA aminoacylation"/>
    <property type="evidence" value="ECO:0007669"/>
    <property type="project" value="UniProtKB-UniRule"/>
</dbReference>
<dbReference type="CDD" id="cd00776">
    <property type="entry name" value="AsxRS_core"/>
    <property type="match status" value="1"/>
</dbReference>
<dbReference type="CDD" id="cd04318">
    <property type="entry name" value="EcAsnRS_like_N"/>
    <property type="match status" value="1"/>
</dbReference>
<dbReference type="FunFam" id="3.30.930.10:FF:000016">
    <property type="entry name" value="Asparagine--tRNA ligase"/>
    <property type="match status" value="1"/>
</dbReference>
<dbReference type="Gene3D" id="3.30.930.10">
    <property type="entry name" value="Bira Bifunctional Protein, Domain 2"/>
    <property type="match status" value="1"/>
</dbReference>
<dbReference type="Gene3D" id="2.40.50.140">
    <property type="entry name" value="Nucleic acid-binding proteins"/>
    <property type="match status" value="1"/>
</dbReference>
<dbReference type="HAMAP" id="MF_00534">
    <property type="entry name" value="Asn_tRNA_synth"/>
    <property type="match status" value="1"/>
</dbReference>
<dbReference type="InterPro" id="IPR004364">
    <property type="entry name" value="Aa-tRNA-synt_II"/>
</dbReference>
<dbReference type="InterPro" id="IPR006195">
    <property type="entry name" value="aa-tRNA-synth_II"/>
</dbReference>
<dbReference type="InterPro" id="IPR045864">
    <property type="entry name" value="aa-tRNA-synth_II/BPL/LPL"/>
</dbReference>
<dbReference type="InterPro" id="IPR004522">
    <property type="entry name" value="Asn-tRNA-ligase"/>
</dbReference>
<dbReference type="InterPro" id="IPR002312">
    <property type="entry name" value="Asp/Asn-tRNA-synth_IIb"/>
</dbReference>
<dbReference type="InterPro" id="IPR012340">
    <property type="entry name" value="NA-bd_OB-fold"/>
</dbReference>
<dbReference type="InterPro" id="IPR004365">
    <property type="entry name" value="NA-bd_OB_tRNA"/>
</dbReference>
<dbReference type="NCBIfam" id="TIGR00457">
    <property type="entry name" value="asnS"/>
    <property type="match status" value="1"/>
</dbReference>
<dbReference type="NCBIfam" id="NF003037">
    <property type="entry name" value="PRK03932.1"/>
    <property type="match status" value="1"/>
</dbReference>
<dbReference type="PANTHER" id="PTHR22594:SF34">
    <property type="entry name" value="ASPARAGINE--TRNA LIGASE, MITOCHONDRIAL-RELATED"/>
    <property type="match status" value="1"/>
</dbReference>
<dbReference type="PANTHER" id="PTHR22594">
    <property type="entry name" value="ASPARTYL/LYSYL-TRNA SYNTHETASE"/>
    <property type="match status" value="1"/>
</dbReference>
<dbReference type="Pfam" id="PF00152">
    <property type="entry name" value="tRNA-synt_2"/>
    <property type="match status" value="1"/>
</dbReference>
<dbReference type="Pfam" id="PF01336">
    <property type="entry name" value="tRNA_anti-codon"/>
    <property type="match status" value="1"/>
</dbReference>
<dbReference type="PRINTS" id="PR01042">
    <property type="entry name" value="TRNASYNTHASP"/>
</dbReference>
<dbReference type="SUPFAM" id="SSF55681">
    <property type="entry name" value="Class II aaRS and biotin synthetases"/>
    <property type="match status" value="1"/>
</dbReference>
<dbReference type="SUPFAM" id="SSF50249">
    <property type="entry name" value="Nucleic acid-binding proteins"/>
    <property type="match status" value="1"/>
</dbReference>
<dbReference type="PROSITE" id="PS50862">
    <property type="entry name" value="AA_TRNA_LIGASE_II"/>
    <property type="match status" value="1"/>
</dbReference>
<sequence length="466" mass="52215">MTHASVVDVLTGKYAVGTTQTVKGWIRTRRDSKAGISFLAISDGSCFHPVQAVVPNTLANYENEVLRLTTACSVEVTGVVAASQGSGQAFELQATEVKVVGWVEDPDTYPMAAKRHSIEYLREQGHLRARTNMVGAVTRVRNCLSQAIHRFFHEQGYLWIAAPLITASDTEGAGEMFRVSTLDMENLPRTPAGKVDYDKDFFGKETFLTVSGQLNVETYACALSKVYTFGPTFRAENSNTSRHLAEFWMVEPEVAFADLEDNAALAEAMLKYVFNAVLAERRDDLEFFAQHVDKDAIGRLERFVASDFAQIDYTDAIEVLKNCGKKFEFPVSWGIDLSSEHERYLAEEHFKSPVVVKNYPKDIKAFYMRLNDDGKTVAAMDVLAPGIGEIIGGSQREERLDVLDARLAEMGLNKEDYWWYRDLRRYGTVPHSGFGLGFERLVVYVTGMGNVRDVIPFPRTPRTAEF</sequence>
<keyword id="KW-0030">Aminoacyl-tRNA synthetase</keyword>
<keyword id="KW-0067">ATP-binding</keyword>
<keyword id="KW-0963">Cytoplasm</keyword>
<keyword id="KW-0436">Ligase</keyword>
<keyword id="KW-0547">Nucleotide-binding</keyword>
<keyword id="KW-0648">Protein biosynthesis</keyword>
<keyword id="KW-1185">Reference proteome</keyword>
<gene>
    <name evidence="1" type="primary">asnS</name>
    <name type="ordered locus">AHA_1486</name>
</gene>